<protein>
    <recommendedName>
        <fullName evidence="1">Small ribosomal subunit protein uS10</fullName>
    </recommendedName>
    <alternativeName>
        <fullName evidence="2">30S ribosomal protein S10</fullName>
    </alternativeName>
</protein>
<organism>
    <name type="scientific">Lacticaseibacillus paracasei (strain ATCC 334 / BCRC 17002 / CCUG 31169 / CIP 107868 / KCTC 3260 / NRRL B-441)</name>
    <name type="common">Lactobacillus paracasei</name>
    <dbReference type="NCBI Taxonomy" id="321967"/>
    <lineage>
        <taxon>Bacteria</taxon>
        <taxon>Bacillati</taxon>
        <taxon>Bacillota</taxon>
        <taxon>Bacilli</taxon>
        <taxon>Lactobacillales</taxon>
        <taxon>Lactobacillaceae</taxon>
        <taxon>Lacticaseibacillus</taxon>
    </lineage>
</organism>
<accession>Q034Y2</accession>
<sequence>MAKQKIRIRLKAYEHRILDQSADKIVETAKRTGATISGPIPLPTERTLYTVLRSPHKYKDSREQFEMRTHKRLIDIVNPTPKTVDALMKLDLPSGVDIEIKL</sequence>
<comment type="function">
    <text evidence="1">Involved in the binding of tRNA to the ribosomes.</text>
</comment>
<comment type="subunit">
    <text evidence="1">Part of the 30S ribosomal subunit.</text>
</comment>
<comment type="similarity">
    <text evidence="1">Belongs to the universal ribosomal protein uS10 family.</text>
</comment>
<reference key="1">
    <citation type="journal article" date="2006" name="Proc. Natl. Acad. Sci. U.S.A.">
        <title>Comparative genomics of the lactic acid bacteria.</title>
        <authorList>
            <person name="Makarova K.S."/>
            <person name="Slesarev A."/>
            <person name="Wolf Y.I."/>
            <person name="Sorokin A."/>
            <person name="Mirkin B."/>
            <person name="Koonin E.V."/>
            <person name="Pavlov A."/>
            <person name="Pavlova N."/>
            <person name="Karamychev V."/>
            <person name="Polouchine N."/>
            <person name="Shakhova V."/>
            <person name="Grigoriev I."/>
            <person name="Lou Y."/>
            <person name="Rohksar D."/>
            <person name="Lucas S."/>
            <person name="Huang K."/>
            <person name="Goodstein D.M."/>
            <person name="Hawkins T."/>
            <person name="Plengvidhya V."/>
            <person name="Welker D."/>
            <person name="Hughes J."/>
            <person name="Goh Y."/>
            <person name="Benson A."/>
            <person name="Baldwin K."/>
            <person name="Lee J.-H."/>
            <person name="Diaz-Muniz I."/>
            <person name="Dosti B."/>
            <person name="Smeianov V."/>
            <person name="Wechter W."/>
            <person name="Barabote R."/>
            <person name="Lorca G."/>
            <person name="Altermann E."/>
            <person name="Barrangou R."/>
            <person name="Ganesan B."/>
            <person name="Xie Y."/>
            <person name="Rawsthorne H."/>
            <person name="Tamir D."/>
            <person name="Parker C."/>
            <person name="Breidt F."/>
            <person name="Broadbent J.R."/>
            <person name="Hutkins R."/>
            <person name="O'Sullivan D."/>
            <person name="Steele J."/>
            <person name="Unlu G."/>
            <person name="Saier M.H. Jr."/>
            <person name="Klaenhammer T."/>
            <person name="Richardson P."/>
            <person name="Kozyavkin S."/>
            <person name="Weimer B.C."/>
            <person name="Mills D.A."/>
        </authorList>
    </citation>
    <scope>NUCLEOTIDE SEQUENCE [LARGE SCALE GENOMIC DNA]</scope>
    <source>
        <strain>ATCC 334 / BCRC 17002 / CCUG 31169 / CIP 107868 / KCTC 3260 / NRRL B-441</strain>
    </source>
</reference>
<keyword id="KW-1185">Reference proteome</keyword>
<keyword id="KW-0687">Ribonucleoprotein</keyword>
<keyword id="KW-0689">Ribosomal protein</keyword>
<feature type="chain" id="PRO_1000015038" description="Small ribosomal subunit protein uS10">
    <location>
        <begin position="1"/>
        <end position="102"/>
    </location>
</feature>
<name>RS10_LACP3</name>
<proteinExistence type="inferred from homology"/>
<gene>
    <name evidence="1" type="primary">rpsJ</name>
    <name type="ordered locus">LSEI_2504</name>
</gene>
<evidence type="ECO:0000255" key="1">
    <source>
        <dbReference type="HAMAP-Rule" id="MF_00508"/>
    </source>
</evidence>
<evidence type="ECO:0000305" key="2"/>
<dbReference type="EMBL" id="CP000423">
    <property type="protein sequence ID" value="ABJ71240.1"/>
    <property type="molecule type" value="Genomic_DNA"/>
</dbReference>
<dbReference type="RefSeq" id="WP_003567567.1">
    <property type="nucleotide sequence ID" value="NC_008526.1"/>
</dbReference>
<dbReference type="RefSeq" id="YP_807682.1">
    <property type="nucleotide sequence ID" value="NC_008526.1"/>
</dbReference>
<dbReference type="SMR" id="Q034Y2"/>
<dbReference type="STRING" id="321967.LSEI_2504"/>
<dbReference type="PaxDb" id="321967-LSEI_2504"/>
<dbReference type="GeneID" id="57091083"/>
<dbReference type="KEGG" id="lca:LSEI_2504"/>
<dbReference type="PATRIC" id="fig|321967.11.peg.2458"/>
<dbReference type="HOGENOM" id="CLU_122625_1_3_9"/>
<dbReference type="Proteomes" id="UP000001651">
    <property type="component" value="Chromosome"/>
</dbReference>
<dbReference type="GO" id="GO:1990904">
    <property type="term" value="C:ribonucleoprotein complex"/>
    <property type="evidence" value="ECO:0007669"/>
    <property type="project" value="UniProtKB-KW"/>
</dbReference>
<dbReference type="GO" id="GO:0005840">
    <property type="term" value="C:ribosome"/>
    <property type="evidence" value="ECO:0007669"/>
    <property type="project" value="UniProtKB-KW"/>
</dbReference>
<dbReference type="GO" id="GO:0003735">
    <property type="term" value="F:structural constituent of ribosome"/>
    <property type="evidence" value="ECO:0007669"/>
    <property type="project" value="InterPro"/>
</dbReference>
<dbReference type="GO" id="GO:0000049">
    <property type="term" value="F:tRNA binding"/>
    <property type="evidence" value="ECO:0007669"/>
    <property type="project" value="UniProtKB-UniRule"/>
</dbReference>
<dbReference type="GO" id="GO:0006412">
    <property type="term" value="P:translation"/>
    <property type="evidence" value="ECO:0007669"/>
    <property type="project" value="UniProtKB-UniRule"/>
</dbReference>
<dbReference type="FunFam" id="3.30.70.600:FF:000001">
    <property type="entry name" value="30S ribosomal protein S10"/>
    <property type="match status" value="1"/>
</dbReference>
<dbReference type="Gene3D" id="3.30.70.600">
    <property type="entry name" value="Ribosomal protein S10 domain"/>
    <property type="match status" value="1"/>
</dbReference>
<dbReference type="HAMAP" id="MF_00508">
    <property type="entry name" value="Ribosomal_uS10"/>
    <property type="match status" value="1"/>
</dbReference>
<dbReference type="InterPro" id="IPR001848">
    <property type="entry name" value="Ribosomal_uS10"/>
</dbReference>
<dbReference type="InterPro" id="IPR018268">
    <property type="entry name" value="Ribosomal_uS10_CS"/>
</dbReference>
<dbReference type="InterPro" id="IPR027486">
    <property type="entry name" value="Ribosomal_uS10_dom"/>
</dbReference>
<dbReference type="InterPro" id="IPR036838">
    <property type="entry name" value="Ribosomal_uS10_dom_sf"/>
</dbReference>
<dbReference type="NCBIfam" id="NF001861">
    <property type="entry name" value="PRK00596.1"/>
    <property type="match status" value="1"/>
</dbReference>
<dbReference type="NCBIfam" id="TIGR01049">
    <property type="entry name" value="rpsJ_bact"/>
    <property type="match status" value="1"/>
</dbReference>
<dbReference type="PANTHER" id="PTHR11700">
    <property type="entry name" value="30S RIBOSOMAL PROTEIN S10 FAMILY MEMBER"/>
    <property type="match status" value="1"/>
</dbReference>
<dbReference type="Pfam" id="PF00338">
    <property type="entry name" value="Ribosomal_S10"/>
    <property type="match status" value="1"/>
</dbReference>
<dbReference type="PRINTS" id="PR00971">
    <property type="entry name" value="RIBOSOMALS10"/>
</dbReference>
<dbReference type="SMART" id="SM01403">
    <property type="entry name" value="Ribosomal_S10"/>
    <property type="match status" value="1"/>
</dbReference>
<dbReference type="SUPFAM" id="SSF54999">
    <property type="entry name" value="Ribosomal protein S10"/>
    <property type="match status" value="1"/>
</dbReference>
<dbReference type="PROSITE" id="PS00361">
    <property type="entry name" value="RIBOSOMAL_S10"/>
    <property type="match status" value="1"/>
</dbReference>